<sequence>MTATAPVITIDGPSGAGKGTLCKAMAEALQWHLLDSGAIYRVLALAALHHQVDISSEEALAPIAAHLDVRFISHSGEIEVILEGENVSTEIRTQDVSNTASRVAAFPRVREALLRRQRGFRELPGLIADGRDMGTVVFPDAPVKIFLDASSEERASRRMLQLQEKGFSVNFERLLSEIKERDDRDRNRAIAPLVPAADALVLDSTTMSIEQVIEIALNYAREKLALV</sequence>
<name>KCY_ERWT9</name>
<feature type="chain" id="PRO_1000100663" description="Cytidylate kinase">
    <location>
        <begin position="1"/>
        <end position="227"/>
    </location>
</feature>
<feature type="binding site" evidence="1">
    <location>
        <begin position="12"/>
        <end position="20"/>
    </location>
    <ligand>
        <name>ATP</name>
        <dbReference type="ChEBI" id="CHEBI:30616"/>
    </ligand>
</feature>
<accession>B2VC78</accession>
<organism>
    <name type="scientific">Erwinia tasmaniensis (strain DSM 17950 / CFBP 7177 / CIP 109463 / NCPPB 4357 / Et1/99)</name>
    <dbReference type="NCBI Taxonomy" id="465817"/>
    <lineage>
        <taxon>Bacteria</taxon>
        <taxon>Pseudomonadati</taxon>
        <taxon>Pseudomonadota</taxon>
        <taxon>Gammaproteobacteria</taxon>
        <taxon>Enterobacterales</taxon>
        <taxon>Erwiniaceae</taxon>
        <taxon>Erwinia</taxon>
    </lineage>
</organism>
<keyword id="KW-0067">ATP-binding</keyword>
<keyword id="KW-0963">Cytoplasm</keyword>
<keyword id="KW-0418">Kinase</keyword>
<keyword id="KW-0547">Nucleotide-binding</keyword>
<keyword id="KW-1185">Reference proteome</keyword>
<keyword id="KW-0808">Transferase</keyword>
<reference key="1">
    <citation type="journal article" date="2008" name="Environ. Microbiol.">
        <title>The genome of Erwinia tasmaniensis strain Et1/99, a non-pathogenic bacterium in the genus Erwinia.</title>
        <authorList>
            <person name="Kube M."/>
            <person name="Migdoll A.M."/>
            <person name="Mueller I."/>
            <person name="Kuhl H."/>
            <person name="Beck A."/>
            <person name="Reinhardt R."/>
            <person name="Geider K."/>
        </authorList>
    </citation>
    <scope>NUCLEOTIDE SEQUENCE [LARGE SCALE GENOMIC DNA]</scope>
    <source>
        <strain>DSM 17950 / CFBP 7177 / CIP 109463 / NCPPB 4357 / Et1/99</strain>
    </source>
</reference>
<comment type="catalytic activity">
    <reaction evidence="1">
        <text>CMP + ATP = CDP + ADP</text>
        <dbReference type="Rhea" id="RHEA:11600"/>
        <dbReference type="ChEBI" id="CHEBI:30616"/>
        <dbReference type="ChEBI" id="CHEBI:58069"/>
        <dbReference type="ChEBI" id="CHEBI:60377"/>
        <dbReference type="ChEBI" id="CHEBI:456216"/>
        <dbReference type="EC" id="2.7.4.25"/>
    </reaction>
</comment>
<comment type="catalytic activity">
    <reaction evidence="1">
        <text>dCMP + ATP = dCDP + ADP</text>
        <dbReference type="Rhea" id="RHEA:25094"/>
        <dbReference type="ChEBI" id="CHEBI:30616"/>
        <dbReference type="ChEBI" id="CHEBI:57566"/>
        <dbReference type="ChEBI" id="CHEBI:58593"/>
        <dbReference type="ChEBI" id="CHEBI:456216"/>
        <dbReference type="EC" id="2.7.4.25"/>
    </reaction>
</comment>
<comment type="subcellular location">
    <subcellularLocation>
        <location evidence="1">Cytoplasm</location>
    </subcellularLocation>
</comment>
<comment type="similarity">
    <text evidence="1">Belongs to the cytidylate kinase family. Type 1 subfamily.</text>
</comment>
<evidence type="ECO:0000255" key="1">
    <source>
        <dbReference type="HAMAP-Rule" id="MF_00238"/>
    </source>
</evidence>
<protein>
    <recommendedName>
        <fullName evidence="1">Cytidylate kinase</fullName>
        <shortName evidence="1">CK</shortName>
        <ecNumber evidence="1">2.7.4.25</ecNumber>
    </recommendedName>
    <alternativeName>
        <fullName evidence="1">Cytidine monophosphate kinase</fullName>
        <shortName evidence="1">CMP kinase</shortName>
    </alternativeName>
</protein>
<dbReference type="EC" id="2.7.4.25" evidence="1"/>
<dbReference type="EMBL" id="CU468135">
    <property type="protein sequence ID" value="CAO97189.1"/>
    <property type="molecule type" value="Genomic_DNA"/>
</dbReference>
<dbReference type="RefSeq" id="WP_012441860.1">
    <property type="nucleotide sequence ID" value="NC_010694.1"/>
</dbReference>
<dbReference type="SMR" id="B2VC78"/>
<dbReference type="STRING" id="465817.ETA_21430"/>
<dbReference type="KEGG" id="eta:ETA_21430"/>
<dbReference type="eggNOG" id="COG0283">
    <property type="taxonomic scope" value="Bacteria"/>
</dbReference>
<dbReference type="HOGENOM" id="CLU_079959_0_2_6"/>
<dbReference type="OrthoDB" id="9807434at2"/>
<dbReference type="Proteomes" id="UP000001726">
    <property type="component" value="Chromosome"/>
</dbReference>
<dbReference type="GO" id="GO:0005829">
    <property type="term" value="C:cytosol"/>
    <property type="evidence" value="ECO:0007669"/>
    <property type="project" value="TreeGrafter"/>
</dbReference>
<dbReference type="GO" id="GO:0005524">
    <property type="term" value="F:ATP binding"/>
    <property type="evidence" value="ECO:0007669"/>
    <property type="project" value="UniProtKB-UniRule"/>
</dbReference>
<dbReference type="GO" id="GO:0036430">
    <property type="term" value="F:CMP kinase activity"/>
    <property type="evidence" value="ECO:0007669"/>
    <property type="project" value="RHEA"/>
</dbReference>
<dbReference type="GO" id="GO:0036431">
    <property type="term" value="F:dCMP kinase activity"/>
    <property type="evidence" value="ECO:0007669"/>
    <property type="project" value="RHEA"/>
</dbReference>
<dbReference type="GO" id="GO:0015949">
    <property type="term" value="P:nucleobase-containing small molecule interconversion"/>
    <property type="evidence" value="ECO:0007669"/>
    <property type="project" value="TreeGrafter"/>
</dbReference>
<dbReference type="GO" id="GO:0006220">
    <property type="term" value="P:pyrimidine nucleotide metabolic process"/>
    <property type="evidence" value="ECO:0007669"/>
    <property type="project" value="UniProtKB-UniRule"/>
</dbReference>
<dbReference type="CDD" id="cd02020">
    <property type="entry name" value="CMPK"/>
    <property type="match status" value="1"/>
</dbReference>
<dbReference type="FunFam" id="3.40.50.300:FF:000262">
    <property type="entry name" value="Cytidylate kinase"/>
    <property type="match status" value="1"/>
</dbReference>
<dbReference type="Gene3D" id="3.40.50.300">
    <property type="entry name" value="P-loop containing nucleotide triphosphate hydrolases"/>
    <property type="match status" value="1"/>
</dbReference>
<dbReference type="HAMAP" id="MF_00238">
    <property type="entry name" value="Cytidyl_kinase_type1"/>
    <property type="match status" value="1"/>
</dbReference>
<dbReference type="InterPro" id="IPR003136">
    <property type="entry name" value="Cytidylate_kin"/>
</dbReference>
<dbReference type="InterPro" id="IPR011994">
    <property type="entry name" value="Cytidylate_kinase_dom"/>
</dbReference>
<dbReference type="InterPro" id="IPR027417">
    <property type="entry name" value="P-loop_NTPase"/>
</dbReference>
<dbReference type="NCBIfam" id="TIGR00017">
    <property type="entry name" value="cmk"/>
    <property type="match status" value="1"/>
</dbReference>
<dbReference type="PANTHER" id="PTHR21299:SF2">
    <property type="entry name" value="CYTIDYLATE KINASE"/>
    <property type="match status" value="1"/>
</dbReference>
<dbReference type="PANTHER" id="PTHR21299">
    <property type="entry name" value="CYTIDYLATE KINASE/PANTOATE-BETA-ALANINE LIGASE"/>
    <property type="match status" value="1"/>
</dbReference>
<dbReference type="Pfam" id="PF02224">
    <property type="entry name" value="Cytidylate_kin"/>
    <property type="match status" value="1"/>
</dbReference>
<dbReference type="SUPFAM" id="SSF52540">
    <property type="entry name" value="P-loop containing nucleoside triphosphate hydrolases"/>
    <property type="match status" value="1"/>
</dbReference>
<gene>
    <name evidence="1" type="primary">cmk</name>
    <name type="ordered locus">ETA_21430</name>
</gene>
<proteinExistence type="inferred from homology"/>